<name>MAGB6_HUMAN</name>
<keyword id="KW-1267">Proteomics identification</keyword>
<keyword id="KW-1185">Reference proteome</keyword>
<keyword id="KW-0825">Tumor antigen</keyword>
<sequence length="407" mass="43992">MPRGHKSKLRTCEKRQETNGQPQGLTGPQATAEKQEESHSSSSSSRACLGDCRRSSDASIPQESQGVSPTGSPDAVVSYSKSDVAANGQDEKSPSTSRDASVPQESQGASPTGSPDAGVSGSKYDVAANGQDEKSPSTSHDVSVPQESQGASPTGSPDAGVSGSKYDVAAEGEDEESVSASQKAIIFKRLSKDAVKKKACTLAQFLQKKFEKKESILKADMLKCVRREYKPYFPQILNRTSQHLVVAFGVELKEMDSSGESYTLVSKLGLPSEGILSGDNALPKSGLLMSLLVVIFMNGNCATEEEVWEFLGLLGIYDGILHSIYGDARKIITEDLVQDKYVVYRQVCNSDPPCYEFLWGPRAYAETTKMRVLRVLADSSNTSPGLYPHLYEDALIDEVERALRLRA</sequence>
<accession>Q8N7X4</accession>
<accession>Q6GS19</accession>
<accession>Q9H219</accession>
<proteinExistence type="evidence at protein level"/>
<comment type="interaction">
    <interactant intactId="EBI-6447163">
        <id>Q8N7X4</id>
    </interactant>
    <interactant intactId="EBI-10232010">
        <id>Q6NUP5</id>
        <label>AGTR1</label>
    </interactant>
    <organismsDiffer>false</organismsDiffer>
    <experiments>3</experiments>
</comment>
<comment type="interaction">
    <interactant intactId="EBI-6447163">
        <id>Q8N7X4</id>
    </interactant>
    <interactant intactId="EBI-12218351">
        <id>Q99767-2</id>
        <label>APBA2</label>
    </interactant>
    <organismsDiffer>false</organismsDiffer>
    <experiments>3</experiments>
</comment>
<comment type="interaction">
    <interactant intactId="EBI-6447163">
        <id>Q8N7X4</id>
    </interactant>
    <interactant intactId="EBI-21499901">
        <id>P42331-2</id>
        <label>ARHGAP25</label>
    </interactant>
    <organismsDiffer>false</organismsDiffer>
    <experiments>3</experiments>
</comment>
<comment type="interaction">
    <interactant intactId="EBI-6447163">
        <id>Q8N7X4</id>
    </interactant>
    <interactant intactId="EBI-2837444">
        <id>Q8WUW1</id>
        <label>BRK1</label>
    </interactant>
    <organismsDiffer>false</organismsDiffer>
    <experiments>3</experiments>
</comment>
<comment type="interaction">
    <interactant intactId="EBI-6447163">
        <id>Q8N7X4</id>
    </interactant>
    <interactant intactId="EBI-356507">
        <id>P50990</id>
        <label>CCT8</label>
    </interactant>
    <organismsDiffer>false</organismsDiffer>
    <experiments>3</experiments>
</comment>
<comment type="interaction">
    <interactant intactId="EBI-6447163">
        <id>Q8N7X4</id>
    </interactant>
    <interactant intactId="EBI-3248760">
        <id>Q13286</id>
        <label>CLN3</label>
    </interactant>
    <organismsDiffer>false</organismsDiffer>
    <experiments>3</experiments>
</comment>
<comment type="interaction">
    <interactant intactId="EBI-6447163">
        <id>Q8N7X4</id>
    </interactant>
    <interactant intactId="EBI-6896746">
        <id>O00429-3</id>
        <label>DNM1L</label>
    </interactant>
    <organismsDiffer>false</organismsDiffer>
    <experiments>3</experiments>
</comment>
<comment type="interaction">
    <interactant intactId="EBI-6447163">
        <id>Q8N7X4</id>
    </interactant>
    <interactant intactId="EBI-5280572">
        <id>P29692-2</id>
        <label>EEF1D</label>
    </interactant>
    <organismsDiffer>false</organismsDiffer>
    <experiments>3</experiments>
</comment>
<comment type="interaction">
    <interactant intactId="EBI-6447163">
        <id>Q8N7X4</id>
    </interactant>
    <interactant intactId="EBI-25852704">
        <id>P00451-2</id>
        <label>F8</label>
    </interactant>
    <organismsDiffer>false</organismsDiffer>
    <experiments>3</experiments>
</comment>
<comment type="interaction">
    <interactant intactId="EBI-6447163">
        <id>Q8N7X4</id>
    </interactant>
    <interactant intactId="EBI-25856644">
        <id>Q06787-7</id>
        <label>FMR1</label>
    </interactant>
    <organismsDiffer>false</organismsDiffer>
    <experiments>3</experiments>
</comment>
<comment type="interaction">
    <interactant intactId="EBI-6447163">
        <id>Q8N7X4</id>
    </interactant>
    <interactant intactId="EBI-746580">
        <id>Q9UJ83</id>
        <label>HACL1</label>
    </interactant>
    <organismsDiffer>false</organismsDiffer>
    <experiments>3</experiments>
</comment>
<comment type="interaction">
    <interactant intactId="EBI-6447163">
        <id>Q8N7X4</id>
    </interactant>
    <interactant intactId="EBI-352572">
        <id>P08238</id>
        <label>HSP90AB1</label>
    </interactant>
    <organismsDiffer>false</organismsDiffer>
    <experiments>3</experiments>
</comment>
<comment type="interaction">
    <interactant intactId="EBI-6447163">
        <id>Q8N7X4</id>
    </interactant>
    <interactant intactId="EBI-466029">
        <id>P42858</id>
        <label>HTT</label>
    </interactant>
    <organismsDiffer>false</organismsDiffer>
    <experiments>2</experiments>
</comment>
<comment type="interaction">
    <interactant intactId="EBI-6447163">
        <id>Q8N7X4</id>
    </interactant>
    <interactant intactId="EBI-713786">
        <id>Q8IXK0</id>
        <label>PHC2</label>
    </interactant>
    <organismsDiffer>false</organismsDiffer>
    <experiments>3</experiments>
</comment>
<comment type="interaction">
    <interactant intactId="EBI-6447163">
        <id>Q8N7X4</id>
    </interactant>
    <interactant intactId="EBI-353193">
        <id>Q06830</id>
        <label>PRDX1</label>
    </interactant>
    <organismsDiffer>false</organismsDiffer>
    <experiments>3</experiments>
</comment>
<comment type="interaction">
    <interactant intactId="EBI-6447163">
        <id>Q8N7X4</id>
    </interactant>
    <interactant intactId="EBI-18191632">
        <id>Q2M1J3</id>
        <label>ROBO1</label>
    </interactant>
    <organismsDiffer>false</organismsDiffer>
    <experiments>3</experiments>
</comment>
<comment type="interaction">
    <interactant intactId="EBI-6447163">
        <id>Q8N7X4</id>
    </interactant>
    <interactant intactId="EBI-986224">
        <id>P01009</id>
        <label>SERPINA1</label>
    </interactant>
    <organismsDiffer>false</organismsDiffer>
    <experiments>3</experiments>
</comment>
<comment type="interaction">
    <interactant intactId="EBI-6447163">
        <id>Q8N7X4</id>
    </interactant>
    <interactant intactId="EBI-717142">
        <id>Q11203</id>
        <label>ST3GAL3</label>
    </interactant>
    <organismsDiffer>false</organismsDiffer>
    <experiments>3</experiments>
</comment>
<comment type="interaction">
    <interactant intactId="EBI-6447163">
        <id>Q8N7X4</id>
    </interactant>
    <interactant intactId="EBI-2876787">
        <id>Q8IYB8</id>
        <label>SUPV3L1</label>
    </interactant>
    <organismsDiffer>false</organismsDiffer>
    <experiments>3</experiments>
</comment>
<comment type="interaction">
    <interactant intactId="EBI-6447163">
        <id>Q8N7X4</id>
    </interactant>
    <interactant intactId="EBI-3927802">
        <id>O94811</id>
        <label>TPPP</label>
    </interactant>
    <organismsDiffer>false</organismsDiffer>
    <experiments>3</experiments>
</comment>
<comment type="tissue specificity">
    <text evidence="3">Expressed in testis. Not expressed in other normal tissues, but is expressed in tumors of different histological origins.</text>
</comment>
<feature type="chain" id="PRO_0000156717" description="Melanoma-associated antigen B6">
    <location>
        <begin position="1"/>
        <end position="407"/>
    </location>
</feature>
<feature type="domain" description="MAGE" evidence="1">
    <location>
        <begin position="195"/>
        <end position="394"/>
    </location>
</feature>
<feature type="region of interest" description="Disordered" evidence="2">
    <location>
        <begin position="1"/>
        <end position="175"/>
    </location>
</feature>
<feature type="compositionally biased region" description="Polar residues" evidence="2">
    <location>
        <begin position="18"/>
        <end position="29"/>
    </location>
</feature>
<feature type="compositionally biased region" description="Polar residues" evidence="2">
    <location>
        <begin position="57"/>
        <end position="71"/>
    </location>
</feature>
<feature type="compositionally biased region" description="Polar residues" evidence="2">
    <location>
        <begin position="94"/>
        <end position="113"/>
    </location>
</feature>
<feature type="compositionally biased region" description="Polar residues" evidence="2">
    <location>
        <begin position="136"/>
        <end position="155"/>
    </location>
</feature>
<feature type="sequence conflict" description="In Ref. 1; BAC05102." evidence="4" ref="1">
    <original>G</original>
    <variation>R</variation>
    <location>
        <position position="172"/>
    </location>
</feature>
<evidence type="ECO:0000255" key="1">
    <source>
        <dbReference type="PROSITE-ProRule" id="PRU00127"/>
    </source>
</evidence>
<evidence type="ECO:0000256" key="2">
    <source>
        <dbReference type="SAM" id="MobiDB-lite"/>
    </source>
</evidence>
<evidence type="ECO:0000269" key="3">
    <source>
    </source>
</evidence>
<evidence type="ECO:0000305" key="4"/>
<protein>
    <recommendedName>
        <fullName>Melanoma-associated antigen B6</fullName>
    </recommendedName>
    <alternativeName>
        <fullName>Cancer/testis antigen 3.4</fullName>
        <shortName>CT3.4</shortName>
    </alternativeName>
    <alternativeName>
        <fullName>MAGE-B6 antigen</fullName>
    </alternativeName>
</protein>
<reference key="1">
    <citation type="journal article" date="2004" name="Nat. Genet.">
        <title>Complete sequencing and characterization of 21,243 full-length human cDNAs.</title>
        <authorList>
            <person name="Ota T."/>
            <person name="Suzuki Y."/>
            <person name="Nishikawa T."/>
            <person name="Otsuki T."/>
            <person name="Sugiyama T."/>
            <person name="Irie R."/>
            <person name="Wakamatsu A."/>
            <person name="Hayashi K."/>
            <person name="Sato H."/>
            <person name="Nagai K."/>
            <person name="Kimura K."/>
            <person name="Makita H."/>
            <person name="Sekine M."/>
            <person name="Obayashi M."/>
            <person name="Nishi T."/>
            <person name="Shibahara T."/>
            <person name="Tanaka T."/>
            <person name="Ishii S."/>
            <person name="Yamamoto J."/>
            <person name="Saito K."/>
            <person name="Kawai Y."/>
            <person name="Isono Y."/>
            <person name="Nakamura Y."/>
            <person name="Nagahari K."/>
            <person name="Murakami K."/>
            <person name="Yasuda T."/>
            <person name="Iwayanagi T."/>
            <person name="Wagatsuma M."/>
            <person name="Shiratori A."/>
            <person name="Sudo H."/>
            <person name="Hosoiri T."/>
            <person name="Kaku Y."/>
            <person name="Kodaira H."/>
            <person name="Kondo H."/>
            <person name="Sugawara M."/>
            <person name="Takahashi M."/>
            <person name="Kanda K."/>
            <person name="Yokoi T."/>
            <person name="Furuya T."/>
            <person name="Kikkawa E."/>
            <person name="Omura Y."/>
            <person name="Abe K."/>
            <person name="Kamihara K."/>
            <person name="Katsuta N."/>
            <person name="Sato K."/>
            <person name="Tanikawa M."/>
            <person name="Yamazaki M."/>
            <person name="Ninomiya K."/>
            <person name="Ishibashi T."/>
            <person name="Yamashita H."/>
            <person name="Murakawa K."/>
            <person name="Fujimori K."/>
            <person name="Tanai H."/>
            <person name="Kimata M."/>
            <person name="Watanabe M."/>
            <person name="Hiraoka S."/>
            <person name="Chiba Y."/>
            <person name="Ishida S."/>
            <person name="Ono Y."/>
            <person name="Takiguchi S."/>
            <person name="Watanabe S."/>
            <person name="Yosida M."/>
            <person name="Hotuta T."/>
            <person name="Kusano J."/>
            <person name="Kanehori K."/>
            <person name="Takahashi-Fujii A."/>
            <person name="Hara H."/>
            <person name="Tanase T.-O."/>
            <person name="Nomura Y."/>
            <person name="Togiya S."/>
            <person name="Komai F."/>
            <person name="Hara R."/>
            <person name="Takeuchi K."/>
            <person name="Arita M."/>
            <person name="Imose N."/>
            <person name="Musashino K."/>
            <person name="Yuuki H."/>
            <person name="Oshima A."/>
            <person name="Sasaki N."/>
            <person name="Aotsuka S."/>
            <person name="Yoshikawa Y."/>
            <person name="Matsunawa H."/>
            <person name="Ichihara T."/>
            <person name="Shiohata N."/>
            <person name="Sano S."/>
            <person name="Moriya S."/>
            <person name="Momiyama H."/>
            <person name="Satoh N."/>
            <person name="Takami S."/>
            <person name="Terashima Y."/>
            <person name="Suzuki O."/>
            <person name="Nakagawa S."/>
            <person name="Senoh A."/>
            <person name="Mizoguchi H."/>
            <person name="Goto Y."/>
            <person name="Shimizu F."/>
            <person name="Wakebe H."/>
            <person name="Hishigaki H."/>
            <person name="Watanabe T."/>
            <person name="Sugiyama A."/>
            <person name="Takemoto M."/>
            <person name="Kawakami B."/>
            <person name="Yamazaki M."/>
            <person name="Watanabe K."/>
            <person name="Kumagai A."/>
            <person name="Itakura S."/>
            <person name="Fukuzumi Y."/>
            <person name="Fujimori Y."/>
            <person name="Komiyama M."/>
            <person name="Tashiro H."/>
            <person name="Tanigami A."/>
            <person name="Fujiwara T."/>
            <person name="Ono T."/>
            <person name="Yamada K."/>
            <person name="Fujii Y."/>
            <person name="Ozaki K."/>
            <person name="Hirao M."/>
            <person name="Ohmori Y."/>
            <person name="Kawabata A."/>
            <person name="Hikiji T."/>
            <person name="Kobatake N."/>
            <person name="Inagaki H."/>
            <person name="Ikema Y."/>
            <person name="Okamoto S."/>
            <person name="Okitani R."/>
            <person name="Kawakami T."/>
            <person name="Noguchi S."/>
            <person name="Itoh T."/>
            <person name="Shigeta K."/>
            <person name="Senba T."/>
            <person name="Matsumura K."/>
            <person name="Nakajima Y."/>
            <person name="Mizuno T."/>
            <person name="Morinaga M."/>
            <person name="Sasaki M."/>
            <person name="Togashi T."/>
            <person name="Oyama M."/>
            <person name="Hata H."/>
            <person name="Watanabe M."/>
            <person name="Komatsu T."/>
            <person name="Mizushima-Sugano J."/>
            <person name="Satoh T."/>
            <person name="Shirai Y."/>
            <person name="Takahashi Y."/>
            <person name="Nakagawa K."/>
            <person name="Okumura K."/>
            <person name="Nagase T."/>
            <person name="Nomura N."/>
            <person name="Kikuchi H."/>
            <person name="Masuho Y."/>
            <person name="Yamashita R."/>
            <person name="Nakai K."/>
            <person name="Yada T."/>
            <person name="Nakamura Y."/>
            <person name="Ohara O."/>
            <person name="Isogai T."/>
            <person name="Sugano S."/>
        </authorList>
    </citation>
    <scope>NUCLEOTIDE SEQUENCE [LARGE SCALE MRNA]</scope>
    <source>
        <tissue>Testis</tissue>
    </source>
</reference>
<reference key="2">
    <citation type="journal article" date="2004" name="Genome Res.">
        <title>The status, quality, and expansion of the NIH full-length cDNA project: the Mammalian Gene Collection (MGC).</title>
        <authorList>
            <consortium name="The MGC Project Team"/>
        </authorList>
    </citation>
    <scope>NUCLEOTIDE SEQUENCE [LARGE SCALE MRNA]</scope>
    <source>
        <tissue>Testis</tissue>
    </source>
</reference>
<reference key="3">
    <citation type="journal article" date="2000" name="Int. J. Cancer">
        <title>MAGE-B5, MAGE-B6, MAGE-C2, and MAGE-C3: four new members of the MAGE family with tumor-specific expression.</title>
        <authorList>
            <person name="Lucas S."/>
            <person name="De Plaen E."/>
            <person name="Boon T."/>
        </authorList>
    </citation>
    <scope>NUCLEOTIDE SEQUENCE [GENOMIC DNA] OF 49-177</scope>
    <scope>TISSUE SPECIFICITY</scope>
    <source>
        <tissue>Blood</tissue>
    </source>
</reference>
<dbReference type="EMBL" id="AK097561">
    <property type="protein sequence ID" value="BAC05102.1"/>
    <property type="molecule type" value="mRNA"/>
</dbReference>
<dbReference type="EMBL" id="BC067286">
    <property type="protein sequence ID" value="AAH67286.1"/>
    <property type="molecule type" value="mRNA"/>
</dbReference>
<dbReference type="EMBL" id="BC074920">
    <property type="protein sequence ID" value="AAH74920.1"/>
    <property type="molecule type" value="mRNA"/>
</dbReference>
<dbReference type="EMBL" id="AF320514">
    <property type="protein sequence ID" value="AAG48624.1"/>
    <property type="molecule type" value="Genomic_DNA"/>
</dbReference>
<dbReference type="CCDS" id="CCDS14217.1"/>
<dbReference type="RefSeq" id="NP_775794.2">
    <property type="nucleotide sequence ID" value="NM_173523.2"/>
</dbReference>
<dbReference type="SMR" id="Q8N7X4"/>
<dbReference type="BioGRID" id="127710">
    <property type="interactions" value="10"/>
</dbReference>
<dbReference type="FunCoup" id="Q8N7X4">
    <property type="interactions" value="29"/>
</dbReference>
<dbReference type="IntAct" id="Q8N7X4">
    <property type="interactions" value="23"/>
</dbReference>
<dbReference type="STRING" id="9606.ENSP00000368320"/>
<dbReference type="GlyCosmos" id="Q8N7X4">
    <property type="glycosylation" value="2 sites, 2 glycans"/>
</dbReference>
<dbReference type="GlyGen" id="Q8N7X4">
    <property type="glycosylation" value="3 sites, 2 O-linked glycans (2 sites)"/>
</dbReference>
<dbReference type="iPTMnet" id="Q8N7X4"/>
<dbReference type="PhosphoSitePlus" id="Q8N7X4"/>
<dbReference type="BioMuta" id="MAGEB6"/>
<dbReference type="DMDM" id="84027854"/>
<dbReference type="jPOST" id="Q8N7X4"/>
<dbReference type="MassIVE" id="Q8N7X4"/>
<dbReference type="PaxDb" id="9606-ENSP00000368320"/>
<dbReference type="PeptideAtlas" id="Q8N7X4"/>
<dbReference type="ProteomicsDB" id="72345"/>
<dbReference type="Antibodypedia" id="24623">
    <property type="antibodies" value="90 antibodies from 19 providers"/>
</dbReference>
<dbReference type="DNASU" id="158809"/>
<dbReference type="Ensembl" id="ENST00000379034.1">
    <property type="protein sequence ID" value="ENSP00000368320.1"/>
    <property type="gene ID" value="ENSG00000176746.6"/>
</dbReference>
<dbReference type="GeneID" id="158809"/>
<dbReference type="KEGG" id="hsa:158809"/>
<dbReference type="MANE-Select" id="ENST00000379034.1">
    <property type="protein sequence ID" value="ENSP00000368320.1"/>
    <property type="RefSeq nucleotide sequence ID" value="NM_173523.2"/>
    <property type="RefSeq protein sequence ID" value="NP_775794.2"/>
</dbReference>
<dbReference type="UCSC" id="uc004dbr.3">
    <property type="organism name" value="human"/>
</dbReference>
<dbReference type="AGR" id="HGNC:23796"/>
<dbReference type="CTD" id="158809"/>
<dbReference type="DisGeNET" id="158809"/>
<dbReference type="GeneCards" id="MAGEB6"/>
<dbReference type="HGNC" id="HGNC:23796">
    <property type="gene designation" value="MAGEB6"/>
</dbReference>
<dbReference type="HPA" id="ENSG00000176746">
    <property type="expression patterns" value="Tissue enriched (testis)"/>
</dbReference>
<dbReference type="MIM" id="300467">
    <property type="type" value="gene"/>
</dbReference>
<dbReference type="neXtProt" id="NX_Q8N7X4"/>
<dbReference type="OpenTargets" id="ENSG00000176746"/>
<dbReference type="PharmGKB" id="PA134864191"/>
<dbReference type="VEuPathDB" id="HostDB:ENSG00000176746"/>
<dbReference type="eggNOG" id="KOG4562">
    <property type="taxonomic scope" value="Eukaryota"/>
</dbReference>
<dbReference type="GeneTree" id="ENSGT00940000159951"/>
<dbReference type="HOGENOM" id="CLU_039582_1_0_1"/>
<dbReference type="InParanoid" id="Q8N7X4"/>
<dbReference type="OMA" id="QKAIIFK"/>
<dbReference type="OrthoDB" id="205198at2759"/>
<dbReference type="PAN-GO" id="Q8N7X4">
    <property type="GO annotations" value="2 GO annotations based on evolutionary models"/>
</dbReference>
<dbReference type="PhylomeDB" id="Q8N7X4"/>
<dbReference type="TreeFam" id="TF328505"/>
<dbReference type="PathwayCommons" id="Q8N7X4"/>
<dbReference type="SignaLink" id="Q8N7X4"/>
<dbReference type="BioGRID-ORCS" id="158809">
    <property type="hits" value="17 hits in 768 CRISPR screens"/>
</dbReference>
<dbReference type="GenomeRNAi" id="158809"/>
<dbReference type="Pharos" id="Q8N7X4">
    <property type="development level" value="Tdark"/>
</dbReference>
<dbReference type="PRO" id="PR:Q8N7X4"/>
<dbReference type="Proteomes" id="UP000005640">
    <property type="component" value="Chromosome X"/>
</dbReference>
<dbReference type="RNAct" id="Q8N7X4">
    <property type="molecule type" value="protein"/>
</dbReference>
<dbReference type="Bgee" id="ENSG00000176746">
    <property type="expression patterns" value="Expressed in male germ line stem cell (sensu Vertebrata) in testis and 5 other cell types or tissues"/>
</dbReference>
<dbReference type="GO" id="GO:0005634">
    <property type="term" value="C:nucleus"/>
    <property type="evidence" value="ECO:0000318"/>
    <property type="project" value="GO_Central"/>
</dbReference>
<dbReference type="GO" id="GO:0000122">
    <property type="term" value="P:negative regulation of transcription by RNA polymerase II"/>
    <property type="evidence" value="ECO:0000318"/>
    <property type="project" value="GO_Central"/>
</dbReference>
<dbReference type="FunFam" id="1.10.10.1210:FF:000001">
    <property type="entry name" value="melanoma-associated antigen D1"/>
    <property type="match status" value="1"/>
</dbReference>
<dbReference type="Gene3D" id="1.10.10.1200">
    <property type="entry name" value="MAGE homology domain, winged helix WH1 motif"/>
    <property type="match status" value="1"/>
</dbReference>
<dbReference type="Gene3D" id="1.10.10.1210">
    <property type="entry name" value="MAGE homology domain, winged helix WH2 motif"/>
    <property type="match status" value="1"/>
</dbReference>
<dbReference type="InterPro" id="IPR037445">
    <property type="entry name" value="MAGE"/>
</dbReference>
<dbReference type="InterPro" id="IPR021072">
    <property type="entry name" value="MAGE_N"/>
</dbReference>
<dbReference type="InterPro" id="IPR041898">
    <property type="entry name" value="MAGE_WH1"/>
</dbReference>
<dbReference type="InterPro" id="IPR041899">
    <property type="entry name" value="MAGE_WH2"/>
</dbReference>
<dbReference type="InterPro" id="IPR002190">
    <property type="entry name" value="MHD_dom"/>
</dbReference>
<dbReference type="PANTHER" id="PTHR11736:SF139">
    <property type="entry name" value="MELANOMA-ASSOCIATED ANTIGEN B6"/>
    <property type="match status" value="1"/>
</dbReference>
<dbReference type="PANTHER" id="PTHR11736">
    <property type="entry name" value="MELANOMA-ASSOCIATED ANTIGEN MAGE ANTIGEN"/>
    <property type="match status" value="1"/>
</dbReference>
<dbReference type="Pfam" id="PF01454">
    <property type="entry name" value="MAGE"/>
    <property type="match status" value="1"/>
</dbReference>
<dbReference type="Pfam" id="PF12440">
    <property type="entry name" value="MAGE_N"/>
    <property type="match status" value="2"/>
</dbReference>
<dbReference type="SMART" id="SM01373">
    <property type="entry name" value="MAGE"/>
    <property type="match status" value="1"/>
</dbReference>
<dbReference type="SMART" id="SM01392">
    <property type="entry name" value="MAGE_N"/>
    <property type="match status" value="2"/>
</dbReference>
<dbReference type="PROSITE" id="PS50838">
    <property type="entry name" value="MAGE"/>
    <property type="match status" value="1"/>
</dbReference>
<gene>
    <name type="primary">MAGEB6</name>
</gene>
<organism>
    <name type="scientific">Homo sapiens</name>
    <name type="common">Human</name>
    <dbReference type="NCBI Taxonomy" id="9606"/>
    <lineage>
        <taxon>Eukaryota</taxon>
        <taxon>Metazoa</taxon>
        <taxon>Chordata</taxon>
        <taxon>Craniata</taxon>
        <taxon>Vertebrata</taxon>
        <taxon>Euteleostomi</taxon>
        <taxon>Mammalia</taxon>
        <taxon>Eutheria</taxon>
        <taxon>Euarchontoglires</taxon>
        <taxon>Primates</taxon>
        <taxon>Haplorrhini</taxon>
        <taxon>Catarrhini</taxon>
        <taxon>Hominidae</taxon>
        <taxon>Homo</taxon>
    </lineage>
</organism>